<feature type="chain" id="PRO_0000238315" description="ATP synthase subunit alpha 1">
    <location>
        <begin position="1"/>
        <end position="511"/>
    </location>
</feature>
<feature type="binding site" evidence="2">
    <location>
        <begin position="174"/>
        <end position="181"/>
    </location>
    <ligand>
        <name>ATP</name>
        <dbReference type="ChEBI" id="CHEBI:30616"/>
    </ligand>
</feature>
<feature type="site" description="Required for activity" evidence="2">
    <location>
        <position position="367"/>
    </location>
</feature>
<reference key="1">
    <citation type="submission" date="2005-08" db="EMBL/GenBank/DDBJ databases">
        <title>Complete sequence of Pelodictyon luteolum DSM 273.</title>
        <authorList>
            <consortium name="US DOE Joint Genome Institute"/>
            <person name="Copeland A."/>
            <person name="Lucas S."/>
            <person name="Lapidus A."/>
            <person name="Barry K."/>
            <person name="Detter J.C."/>
            <person name="Glavina T."/>
            <person name="Hammon N."/>
            <person name="Israni S."/>
            <person name="Pitluck S."/>
            <person name="Bryant D."/>
            <person name="Schmutz J."/>
            <person name="Larimer F."/>
            <person name="Land M."/>
            <person name="Kyrpides N."/>
            <person name="Ivanova N."/>
            <person name="Richardson P."/>
        </authorList>
    </citation>
    <scope>NUCLEOTIDE SEQUENCE [LARGE SCALE GENOMIC DNA]</scope>
    <source>
        <strain>DSM 273 / BCRC 81028 / 2530</strain>
    </source>
</reference>
<proteinExistence type="inferred from homology"/>
<accession>Q3B3Z9</accession>
<sequence>MQEKTLTESIDAALSSIGEASRTTQPEIELRENGVVTTVLNGIALIRGLPGVGYEELVEMSGGVYGIAFNVDPDEVGVVLLGEYAKLQAGGRARRTGRVMDVPVGDGLLGRVVNPLGRPLDAEGEPRFSGRLPIERPSPGIMDRNAVSTPLQTGLKVVDAIVPIGRGQRELILGDRQTGKTAIAVATILNQKGRNVICIYCAIGQRASAVAKVLAQLREHGAMAHTVAVVTEGNDPSGLQYIAPYAATSIGEYFMEQGRDVLIVYDDLTNHARAYRELSLLLKRPPGREAFPGDIFYVHSRLLERSTHLRKELGGGSLTALPIIETEAQNISAYIPTNLISITDGQIYLSPTLFELGNLPAVDIGKSVSRVGGKAQLAAYRSVTGRLKLAYAQFEELENFARFGTRLDEASRKAITHGERIRECLKQDELDVLGVEEQILILLSLSEGQFDPLELSEVSGAMKRLSAAARELPRDLLERLHSDRPLSDEDRRRLLQTAEAALQKKRTAGRL</sequence>
<dbReference type="EC" id="7.1.2.2" evidence="2"/>
<dbReference type="EMBL" id="CP000096">
    <property type="protein sequence ID" value="ABB23932.1"/>
    <property type="molecule type" value="Genomic_DNA"/>
</dbReference>
<dbReference type="RefSeq" id="WP_011357804.1">
    <property type="nucleotide sequence ID" value="NC_007512.1"/>
</dbReference>
<dbReference type="SMR" id="Q3B3Z9"/>
<dbReference type="STRING" id="319225.Plut_1070"/>
<dbReference type="KEGG" id="plt:Plut_1070"/>
<dbReference type="eggNOG" id="COG0056">
    <property type="taxonomic scope" value="Bacteria"/>
</dbReference>
<dbReference type="HOGENOM" id="CLU_010091_2_1_10"/>
<dbReference type="OrthoDB" id="9803053at2"/>
<dbReference type="Proteomes" id="UP000002709">
    <property type="component" value="Chromosome"/>
</dbReference>
<dbReference type="GO" id="GO:0005886">
    <property type="term" value="C:plasma membrane"/>
    <property type="evidence" value="ECO:0007669"/>
    <property type="project" value="UniProtKB-SubCell"/>
</dbReference>
<dbReference type="GO" id="GO:0045259">
    <property type="term" value="C:proton-transporting ATP synthase complex"/>
    <property type="evidence" value="ECO:0007669"/>
    <property type="project" value="UniProtKB-KW"/>
</dbReference>
<dbReference type="GO" id="GO:0043531">
    <property type="term" value="F:ADP binding"/>
    <property type="evidence" value="ECO:0007669"/>
    <property type="project" value="TreeGrafter"/>
</dbReference>
<dbReference type="GO" id="GO:0005524">
    <property type="term" value="F:ATP binding"/>
    <property type="evidence" value="ECO:0007669"/>
    <property type="project" value="UniProtKB-UniRule"/>
</dbReference>
<dbReference type="GO" id="GO:0046933">
    <property type="term" value="F:proton-transporting ATP synthase activity, rotational mechanism"/>
    <property type="evidence" value="ECO:0007669"/>
    <property type="project" value="UniProtKB-UniRule"/>
</dbReference>
<dbReference type="CDD" id="cd18113">
    <property type="entry name" value="ATP-synt_F1_alpha_C"/>
    <property type="match status" value="1"/>
</dbReference>
<dbReference type="CDD" id="cd18116">
    <property type="entry name" value="ATP-synt_F1_alpha_N"/>
    <property type="match status" value="1"/>
</dbReference>
<dbReference type="CDD" id="cd01132">
    <property type="entry name" value="F1-ATPase_alpha_CD"/>
    <property type="match status" value="1"/>
</dbReference>
<dbReference type="FunFam" id="3.40.50.300:FF:000002">
    <property type="entry name" value="ATP synthase subunit alpha"/>
    <property type="match status" value="1"/>
</dbReference>
<dbReference type="Gene3D" id="2.40.30.20">
    <property type="match status" value="1"/>
</dbReference>
<dbReference type="Gene3D" id="1.20.150.20">
    <property type="entry name" value="ATP synthase alpha/beta chain, C-terminal domain"/>
    <property type="match status" value="1"/>
</dbReference>
<dbReference type="Gene3D" id="3.40.50.300">
    <property type="entry name" value="P-loop containing nucleotide triphosphate hydrolases"/>
    <property type="match status" value="1"/>
</dbReference>
<dbReference type="HAMAP" id="MF_01346">
    <property type="entry name" value="ATP_synth_alpha_bact"/>
    <property type="match status" value="1"/>
</dbReference>
<dbReference type="InterPro" id="IPR017710">
    <property type="entry name" value="Alt_ATP_synth_F1_asu"/>
</dbReference>
<dbReference type="InterPro" id="IPR023366">
    <property type="entry name" value="ATP_synth_asu-like_sf"/>
</dbReference>
<dbReference type="InterPro" id="IPR000793">
    <property type="entry name" value="ATP_synth_asu_C"/>
</dbReference>
<dbReference type="InterPro" id="IPR038376">
    <property type="entry name" value="ATP_synth_asu_C_sf"/>
</dbReference>
<dbReference type="InterPro" id="IPR033732">
    <property type="entry name" value="ATP_synth_F1_a_nt-bd_dom"/>
</dbReference>
<dbReference type="InterPro" id="IPR005294">
    <property type="entry name" value="ATP_synth_F1_asu"/>
</dbReference>
<dbReference type="InterPro" id="IPR020003">
    <property type="entry name" value="ATPase_a/bsu_AS"/>
</dbReference>
<dbReference type="InterPro" id="IPR004100">
    <property type="entry name" value="ATPase_F1/V1/A1_a/bsu_N"/>
</dbReference>
<dbReference type="InterPro" id="IPR036121">
    <property type="entry name" value="ATPase_F1/V1/A1_a/bsu_N_sf"/>
</dbReference>
<dbReference type="InterPro" id="IPR000194">
    <property type="entry name" value="ATPase_F1/V1/A1_a/bsu_nucl-bd"/>
</dbReference>
<dbReference type="InterPro" id="IPR027417">
    <property type="entry name" value="P-loop_NTPase"/>
</dbReference>
<dbReference type="NCBIfam" id="TIGR03324">
    <property type="entry name" value="alt_F1F0_F1_al"/>
    <property type="match status" value="1"/>
</dbReference>
<dbReference type="NCBIfam" id="TIGR00962">
    <property type="entry name" value="atpA"/>
    <property type="match status" value="1"/>
</dbReference>
<dbReference type="NCBIfam" id="NF009884">
    <property type="entry name" value="PRK13343.1"/>
    <property type="match status" value="1"/>
</dbReference>
<dbReference type="PANTHER" id="PTHR48082">
    <property type="entry name" value="ATP SYNTHASE SUBUNIT ALPHA, MITOCHONDRIAL"/>
    <property type="match status" value="1"/>
</dbReference>
<dbReference type="PANTHER" id="PTHR48082:SF2">
    <property type="entry name" value="ATP SYNTHASE SUBUNIT ALPHA, MITOCHONDRIAL"/>
    <property type="match status" value="1"/>
</dbReference>
<dbReference type="Pfam" id="PF00006">
    <property type="entry name" value="ATP-synt_ab"/>
    <property type="match status" value="1"/>
</dbReference>
<dbReference type="Pfam" id="PF00306">
    <property type="entry name" value="ATP-synt_ab_C"/>
    <property type="match status" value="1"/>
</dbReference>
<dbReference type="Pfam" id="PF02874">
    <property type="entry name" value="ATP-synt_ab_N"/>
    <property type="match status" value="1"/>
</dbReference>
<dbReference type="SUPFAM" id="SSF47917">
    <property type="entry name" value="C-terminal domain of alpha and beta subunits of F1 ATP synthase"/>
    <property type="match status" value="1"/>
</dbReference>
<dbReference type="SUPFAM" id="SSF50615">
    <property type="entry name" value="N-terminal domain of alpha and beta subunits of F1 ATP synthase"/>
    <property type="match status" value="1"/>
</dbReference>
<dbReference type="SUPFAM" id="SSF52540">
    <property type="entry name" value="P-loop containing nucleoside triphosphate hydrolases"/>
    <property type="match status" value="1"/>
</dbReference>
<dbReference type="PROSITE" id="PS00152">
    <property type="entry name" value="ATPASE_ALPHA_BETA"/>
    <property type="match status" value="1"/>
</dbReference>
<evidence type="ECO:0000250" key="1"/>
<evidence type="ECO:0000255" key="2">
    <source>
        <dbReference type="HAMAP-Rule" id="MF_01346"/>
    </source>
</evidence>
<name>ATPA1_CHLL3</name>
<organism>
    <name type="scientific">Chlorobium luteolum (strain DSM 273 / BCRC 81028 / 2530)</name>
    <name type="common">Pelodictyon luteolum</name>
    <dbReference type="NCBI Taxonomy" id="319225"/>
    <lineage>
        <taxon>Bacteria</taxon>
        <taxon>Pseudomonadati</taxon>
        <taxon>Chlorobiota</taxon>
        <taxon>Chlorobiia</taxon>
        <taxon>Chlorobiales</taxon>
        <taxon>Chlorobiaceae</taxon>
        <taxon>Chlorobium/Pelodictyon group</taxon>
        <taxon>Pelodictyon</taxon>
    </lineage>
</organism>
<gene>
    <name evidence="2" type="primary">atpA1</name>
    <name type="ordered locus">Plut_1070</name>
</gene>
<comment type="function">
    <text evidence="2">Produces ATP from ADP in the presence of a proton gradient across the membrane. The alpha chain is a regulatory subunit.</text>
</comment>
<comment type="catalytic activity">
    <reaction evidence="2">
        <text>ATP + H2O + 4 H(+)(in) = ADP + phosphate + 5 H(+)(out)</text>
        <dbReference type="Rhea" id="RHEA:57720"/>
        <dbReference type="ChEBI" id="CHEBI:15377"/>
        <dbReference type="ChEBI" id="CHEBI:15378"/>
        <dbReference type="ChEBI" id="CHEBI:30616"/>
        <dbReference type="ChEBI" id="CHEBI:43474"/>
        <dbReference type="ChEBI" id="CHEBI:456216"/>
        <dbReference type="EC" id="7.1.2.2"/>
    </reaction>
</comment>
<comment type="subunit">
    <text evidence="1">F-type ATPases have 2 components, CF(1) - the catalytic core - and CF(0) - the membrane proton channel. CF(1) has five subunits: alpha(3), beta(3), gamma(1), delta(1), epsilon(1). CF(0) has four main subunits: a(1), b(1), b'(1) and c(9-12) (By similarity).</text>
</comment>
<comment type="subcellular location">
    <subcellularLocation>
        <location evidence="2">Cell inner membrane</location>
        <topology evidence="2">Peripheral membrane protein</topology>
    </subcellularLocation>
</comment>
<comment type="similarity">
    <text evidence="2">Belongs to the ATPase alpha/beta chains family.</text>
</comment>
<keyword id="KW-0066">ATP synthesis</keyword>
<keyword id="KW-0067">ATP-binding</keyword>
<keyword id="KW-0997">Cell inner membrane</keyword>
<keyword id="KW-1003">Cell membrane</keyword>
<keyword id="KW-0139">CF(1)</keyword>
<keyword id="KW-0375">Hydrogen ion transport</keyword>
<keyword id="KW-0406">Ion transport</keyword>
<keyword id="KW-0472">Membrane</keyword>
<keyword id="KW-0547">Nucleotide-binding</keyword>
<keyword id="KW-1185">Reference proteome</keyword>
<keyword id="KW-1278">Translocase</keyword>
<keyword id="KW-0813">Transport</keyword>
<protein>
    <recommendedName>
        <fullName evidence="2">ATP synthase subunit alpha 1</fullName>
        <ecNumber evidence="2">7.1.2.2</ecNumber>
    </recommendedName>
    <alternativeName>
        <fullName evidence="2">ATP synthase F1 sector subunit alpha 1</fullName>
    </alternativeName>
    <alternativeName>
        <fullName evidence="2">F-ATPase subunit alpha 1</fullName>
    </alternativeName>
</protein>